<reference key="1">
    <citation type="journal article" date="2007" name="J. Bacteriol.">
        <title>The genome sequence of avian pathogenic Escherichia coli strain O1:K1:H7 shares strong similarities with human extraintestinal pathogenic E. coli genomes.</title>
        <authorList>
            <person name="Johnson T.J."/>
            <person name="Kariyawasam S."/>
            <person name="Wannemuehler Y."/>
            <person name="Mangiamele P."/>
            <person name="Johnson S.J."/>
            <person name="Doetkott C."/>
            <person name="Skyberg J.A."/>
            <person name="Lynne A.M."/>
            <person name="Johnson J.R."/>
            <person name="Nolan L.K."/>
        </authorList>
    </citation>
    <scope>NUCLEOTIDE SEQUENCE [LARGE SCALE GENOMIC DNA]</scope>
</reference>
<keyword id="KW-0998">Cell outer membrane</keyword>
<keyword id="KW-0961">Cell wall biogenesis/degradation</keyword>
<keyword id="KW-0449">Lipoprotein</keyword>
<keyword id="KW-0456">Lyase</keyword>
<keyword id="KW-0472">Membrane</keyword>
<keyword id="KW-0564">Palmitate</keyword>
<keyword id="KW-1185">Reference proteome</keyword>
<keyword id="KW-0732">Signal</keyword>
<accession>A1AFE9</accession>
<evidence type="ECO:0000255" key="1">
    <source>
        <dbReference type="HAMAP-Rule" id="MF_01616"/>
    </source>
</evidence>
<evidence type="ECO:0000305" key="2"/>
<proteinExistence type="inferred from homology"/>
<protein>
    <recommendedName>
        <fullName evidence="1">Membrane-bound lytic murein transglycosylase C</fullName>
        <ecNumber evidence="1">4.2.2.n1</ecNumber>
    </recommendedName>
    <alternativeName>
        <fullName evidence="1">Murein lyase C</fullName>
    </alternativeName>
</protein>
<dbReference type="EC" id="4.2.2.n1" evidence="1"/>
<dbReference type="EMBL" id="CP000468">
    <property type="protein sequence ID" value="ABJ02389.1"/>
    <property type="status" value="ALT_INIT"/>
    <property type="molecule type" value="Genomic_DNA"/>
</dbReference>
<dbReference type="RefSeq" id="WP_000760323.1">
    <property type="nucleotide sequence ID" value="NZ_CADILS010000010.1"/>
</dbReference>
<dbReference type="SMR" id="A1AFE9"/>
<dbReference type="CAZy" id="GH23">
    <property type="family name" value="Glycoside Hydrolase Family 23"/>
</dbReference>
<dbReference type="GeneID" id="86861053"/>
<dbReference type="KEGG" id="ecv:APECO1_3538"/>
<dbReference type="HOGENOM" id="CLU_044583_0_0_6"/>
<dbReference type="Proteomes" id="UP000008216">
    <property type="component" value="Chromosome"/>
</dbReference>
<dbReference type="GO" id="GO:0009279">
    <property type="term" value="C:cell outer membrane"/>
    <property type="evidence" value="ECO:0007669"/>
    <property type="project" value="UniProtKB-SubCell"/>
</dbReference>
<dbReference type="GO" id="GO:0016798">
    <property type="term" value="F:hydrolase activity, acting on glycosyl bonds"/>
    <property type="evidence" value="ECO:0007669"/>
    <property type="project" value="InterPro"/>
</dbReference>
<dbReference type="GO" id="GO:0008933">
    <property type="term" value="F:peptidoglycan lytic transglycosylase activity"/>
    <property type="evidence" value="ECO:0007669"/>
    <property type="project" value="UniProtKB-UniRule"/>
</dbReference>
<dbReference type="GO" id="GO:0016998">
    <property type="term" value="P:cell wall macromolecule catabolic process"/>
    <property type="evidence" value="ECO:0007669"/>
    <property type="project" value="UniProtKB-UniRule"/>
</dbReference>
<dbReference type="GO" id="GO:0071555">
    <property type="term" value="P:cell wall organization"/>
    <property type="evidence" value="ECO:0007669"/>
    <property type="project" value="UniProtKB-KW"/>
</dbReference>
<dbReference type="GO" id="GO:0000270">
    <property type="term" value="P:peptidoglycan metabolic process"/>
    <property type="evidence" value="ECO:0007669"/>
    <property type="project" value="InterPro"/>
</dbReference>
<dbReference type="CDD" id="cd16893">
    <property type="entry name" value="LT_MltC_MltE"/>
    <property type="match status" value="1"/>
</dbReference>
<dbReference type="FunFam" id="1.10.530.10:FF:000002">
    <property type="entry name" value="Membrane-bound lytic murein transglycosylase C"/>
    <property type="match status" value="1"/>
</dbReference>
<dbReference type="Gene3D" id="1.10.530.10">
    <property type="match status" value="1"/>
</dbReference>
<dbReference type="HAMAP" id="MF_01616">
    <property type="entry name" value="MltC"/>
    <property type="match status" value="1"/>
</dbReference>
<dbReference type="InterPro" id="IPR023346">
    <property type="entry name" value="Lysozyme-like_dom_sf"/>
</dbReference>
<dbReference type="InterPro" id="IPR023664">
    <property type="entry name" value="Murein_transglycosylaseC"/>
</dbReference>
<dbReference type="InterPro" id="IPR024570">
    <property type="entry name" value="Murein_transglycosylaseC_N"/>
</dbReference>
<dbReference type="InterPro" id="IPR000189">
    <property type="entry name" value="Transglyc_AS"/>
</dbReference>
<dbReference type="InterPro" id="IPR008258">
    <property type="entry name" value="Transglycosylase_SLT_dom_1"/>
</dbReference>
<dbReference type="NCBIfam" id="NF008670">
    <property type="entry name" value="PRK11671.1"/>
    <property type="match status" value="1"/>
</dbReference>
<dbReference type="PANTHER" id="PTHR37423:SF2">
    <property type="entry name" value="MEMBRANE-BOUND LYTIC MUREIN TRANSGLYCOSYLASE C"/>
    <property type="match status" value="1"/>
</dbReference>
<dbReference type="PANTHER" id="PTHR37423">
    <property type="entry name" value="SOLUBLE LYTIC MUREIN TRANSGLYCOSYLASE-RELATED"/>
    <property type="match status" value="1"/>
</dbReference>
<dbReference type="Pfam" id="PF11873">
    <property type="entry name" value="Mltc_N"/>
    <property type="match status" value="1"/>
</dbReference>
<dbReference type="Pfam" id="PF01464">
    <property type="entry name" value="SLT"/>
    <property type="match status" value="1"/>
</dbReference>
<dbReference type="SUPFAM" id="SSF53955">
    <property type="entry name" value="Lysozyme-like"/>
    <property type="match status" value="1"/>
</dbReference>
<dbReference type="PROSITE" id="PS51257">
    <property type="entry name" value="PROKAR_LIPOPROTEIN"/>
    <property type="match status" value="1"/>
</dbReference>
<dbReference type="PROSITE" id="PS00922">
    <property type="entry name" value="TRANSGLYCOSYLASE"/>
    <property type="match status" value="1"/>
</dbReference>
<gene>
    <name evidence="1" type="primary">mltC</name>
    <name type="ordered locus">Ecok1_28950</name>
    <name type="ORF">APECO1_3538</name>
</gene>
<organism>
    <name type="scientific">Escherichia coli O1:K1 / APEC</name>
    <dbReference type="NCBI Taxonomy" id="405955"/>
    <lineage>
        <taxon>Bacteria</taxon>
        <taxon>Pseudomonadati</taxon>
        <taxon>Pseudomonadota</taxon>
        <taxon>Gammaproteobacteria</taxon>
        <taxon>Enterobacterales</taxon>
        <taxon>Enterobacteriaceae</taxon>
        <taxon>Escherichia</taxon>
    </lineage>
</organism>
<name>MLTC_ECOK1</name>
<sequence length="359" mass="40113">MKKYLALALIAPLLISCSTTKKGDTYNEAWVKDTNGFDILMGQFAHNIENIWGFKEVVIAGPKDYVKYTDQYQTRSHINFDDGTITIETIAGTEPAAHLRRAIIKTLLMGDDPSSVDLYSDVDDITISKEPFLYGQVVDNTGQPIRWEGRASNFADYLLKNRLKSRSNGLRIIYSVTINMVPNHLDKRAHKYLGMVRQASRKYGVDESLILAIMQTESSFNPYAVSRSDALGLMQVVQHTAGKDVFRSQGKSGTPSRSFLFDPASNIDTGTAYLAMLNNVYLGGIDNPTSRRYAVITAYNGGAGSVLRVFSNDKIQAANIINTMTPGDVYQTLTTRHPSAESRRYLYKVNTAQKSYRRR</sequence>
<comment type="function">
    <text evidence="1">Murein-degrading enzyme. May play a role in recycling of muropeptides during cell elongation and/or cell division.</text>
</comment>
<comment type="catalytic activity">
    <reaction evidence="1">
        <text>Exolytic cleavage of the (1-&gt;4)-beta-glycosidic linkage between N-acetylmuramic acid (MurNAc) and N-acetylglucosamine (GlcNAc) residues in peptidoglycan, from either the reducing or the non-reducing ends of the peptidoglycan chains, with concomitant formation of a 1,6-anhydrobond in the MurNAc residue.</text>
        <dbReference type="EC" id="4.2.2.n1"/>
    </reaction>
</comment>
<comment type="subcellular location">
    <subcellularLocation>
        <location evidence="1">Cell outer membrane</location>
        <topology evidence="1">Lipid-anchor</topology>
    </subcellularLocation>
</comment>
<comment type="similarity">
    <text evidence="1">Belongs to the transglycosylase Slt family.</text>
</comment>
<comment type="sequence caution" evidence="2">
    <conflict type="erroneous initiation">
        <sequence resource="EMBL-CDS" id="ABJ02389"/>
    </conflict>
</comment>
<feature type="signal peptide" evidence="1">
    <location>
        <begin position="1"/>
        <end position="16"/>
    </location>
</feature>
<feature type="chain" id="PRO_0000335582" description="Membrane-bound lytic murein transglycosylase C">
    <location>
        <begin position="17"/>
        <end position="359"/>
    </location>
</feature>
<feature type="lipid moiety-binding region" description="N-palmitoyl cysteine" evidence="1">
    <location>
        <position position="17"/>
    </location>
</feature>
<feature type="lipid moiety-binding region" description="S-diacylglycerol cysteine" evidence="1">
    <location>
        <position position="17"/>
    </location>
</feature>